<feature type="chain" id="PRO_1000120134" description="Large ribosomal subunit protein bL32">
    <location>
        <begin position="1"/>
        <end position="67"/>
    </location>
</feature>
<feature type="region of interest" description="Disordered" evidence="2">
    <location>
        <begin position="1"/>
        <end position="22"/>
    </location>
</feature>
<feature type="compositionally biased region" description="Basic residues" evidence="2">
    <location>
        <begin position="1"/>
        <end position="19"/>
    </location>
</feature>
<dbReference type="EMBL" id="AP009152">
    <property type="protein sequence ID" value="BAG29393.1"/>
    <property type="molecule type" value="Genomic_DNA"/>
</dbReference>
<dbReference type="RefSeq" id="WP_012398114.1">
    <property type="nucleotide sequence ID" value="NZ_VECX01000011.1"/>
</dbReference>
<dbReference type="SMR" id="B2GFM0"/>
<dbReference type="STRING" id="378753.KRH_10460"/>
<dbReference type="GeneID" id="93242688"/>
<dbReference type="KEGG" id="krh:KRH_10460"/>
<dbReference type="eggNOG" id="COG0333">
    <property type="taxonomic scope" value="Bacteria"/>
</dbReference>
<dbReference type="HOGENOM" id="CLU_2805252_0_0_11"/>
<dbReference type="OrthoDB" id="9807363at2"/>
<dbReference type="Proteomes" id="UP000008838">
    <property type="component" value="Chromosome"/>
</dbReference>
<dbReference type="GO" id="GO:0015934">
    <property type="term" value="C:large ribosomal subunit"/>
    <property type="evidence" value="ECO:0007669"/>
    <property type="project" value="InterPro"/>
</dbReference>
<dbReference type="GO" id="GO:0003735">
    <property type="term" value="F:structural constituent of ribosome"/>
    <property type="evidence" value="ECO:0007669"/>
    <property type="project" value="InterPro"/>
</dbReference>
<dbReference type="GO" id="GO:0006412">
    <property type="term" value="P:translation"/>
    <property type="evidence" value="ECO:0007669"/>
    <property type="project" value="UniProtKB-UniRule"/>
</dbReference>
<dbReference type="HAMAP" id="MF_00340">
    <property type="entry name" value="Ribosomal_bL32"/>
    <property type="match status" value="1"/>
</dbReference>
<dbReference type="InterPro" id="IPR002677">
    <property type="entry name" value="Ribosomal_bL32"/>
</dbReference>
<dbReference type="InterPro" id="IPR011332">
    <property type="entry name" value="Ribosomal_zn-bd"/>
</dbReference>
<dbReference type="NCBIfam" id="TIGR01031">
    <property type="entry name" value="rpmF_bact"/>
    <property type="match status" value="1"/>
</dbReference>
<dbReference type="Pfam" id="PF01783">
    <property type="entry name" value="Ribosomal_L32p"/>
    <property type="match status" value="1"/>
</dbReference>
<dbReference type="SUPFAM" id="SSF57829">
    <property type="entry name" value="Zn-binding ribosomal proteins"/>
    <property type="match status" value="1"/>
</dbReference>
<proteinExistence type="inferred from homology"/>
<evidence type="ECO:0000255" key="1">
    <source>
        <dbReference type="HAMAP-Rule" id="MF_00340"/>
    </source>
</evidence>
<evidence type="ECO:0000256" key="2">
    <source>
        <dbReference type="SAM" id="MobiDB-lite"/>
    </source>
</evidence>
<evidence type="ECO:0000305" key="3"/>
<reference key="1">
    <citation type="journal article" date="2008" name="J. Bacteriol.">
        <title>Complete genome sequence of the soil actinomycete Kocuria rhizophila.</title>
        <authorList>
            <person name="Takarada H."/>
            <person name="Sekine M."/>
            <person name="Kosugi H."/>
            <person name="Matsuo Y."/>
            <person name="Fujisawa T."/>
            <person name="Omata S."/>
            <person name="Kishi E."/>
            <person name="Shimizu A."/>
            <person name="Tsukatani N."/>
            <person name="Tanikawa S."/>
            <person name="Fujita N."/>
            <person name="Harayama S."/>
        </authorList>
    </citation>
    <scope>NUCLEOTIDE SEQUENCE [LARGE SCALE GENOMIC DNA]</scope>
    <source>
        <strain>ATCC 9341 / DSM 348 / NBRC 103217 / DC2201</strain>
    </source>
</reference>
<comment type="similarity">
    <text evidence="1">Belongs to the bacterial ribosomal protein bL32 family.</text>
</comment>
<organism>
    <name type="scientific">Kocuria rhizophila (strain ATCC 9341 / DSM 348 / NBRC 103217 / DC2201)</name>
    <dbReference type="NCBI Taxonomy" id="378753"/>
    <lineage>
        <taxon>Bacteria</taxon>
        <taxon>Bacillati</taxon>
        <taxon>Actinomycetota</taxon>
        <taxon>Actinomycetes</taxon>
        <taxon>Micrococcales</taxon>
        <taxon>Micrococcaceae</taxon>
        <taxon>Kocuria</taxon>
    </lineage>
</organism>
<protein>
    <recommendedName>
        <fullName evidence="1">Large ribosomal subunit protein bL32</fullName>
    </recommendedName>
    <alternativeName>
        <fullName evidence="3">50S ribosomal protein L32</fullName>
    </alternativeName>
</protein>
<gene>
    <name evidence="1" type="primary">rpmF</name>
    <name type="ordered locus">KRH_10460</name>
</gene>
<sequence>MAVPKRKMSRANTRMRRSQWKAQAPKLVKTVENGKVSYSLPHQAKLVSDSAGTPLFYEYKGRKVADA</sequence>
<accession>B2GFM0</accession>
<name>RL32_KOCRD</name>
<keyword id="KW-1185">Reference proteome</keyword>
<keyword id="KW-0687">Ribonucleoprotein</keyword>
<keyword id="KW-0689">Ribosomal protein</keyword>